<sequence length="579" mass="65872">MSETLATDATAPAEKKDFIRQIVREDLASGKHTVIRTRFPPEPNGYLHIGHAKAICLDFGLAAEFGGLCNLRLDDTNPAKEDPEFVVAIQDDVRWLGYDWAQLRHASDYFQVYYLAAQKLIRDGHAFVCDLSAEQVRQYRGTLTEPGRNSPFRERSVEENLDLFARMRAGEFPDGARTLRAKIDMASGNINLRDPALYRIKHVEHQNTGNAWPIYPMYDFAHSLGDAVEGITHSLCTLEFEDHRPLYDWCVDKVDLVGHPELLQPLLDKGLPREAAKPRQIEFSRLNINYTVMSKRKLTALVEEQLVDGWDDPRMYTLQGLRRRGYTPAAMRLFVDRVGISKQNSLIDFSVLEGCLREDLDAAAPRRMAVIDPLKLVLTNLPEGHTETLQFSNHPKDDSFGTREVPFARELWIEREDFAEVPPKGWKRLVPGGEIRLRGAGIARVDEVIKNADGEIVELRGWLDPESRPGMEGANRKVKGTIHWVSAAHAVEAEIRLYDRLFSVEKPDDESEGKTYRDYLNPESKRNVRGYVEPSAAMAAPEQAFQFERTGYFVADRRDHSEATPVFNRSVTLRDTWAK</sequence>
<name>SYQ_XANAC</name>
<dbReference type="EC" id="6.1.1.18" evidence="1"/>
<dbReference type="EMBL" id="AE008923">
    <property type="protein sequence ID" value="AAM35781.1"/>
    <property type="molecule type" value="Genomic_DNA"/>
</dbReference>
<dbReference type="RefSeq" id="WP_003487506.1">
    <property type="nucleotide sequence ID" value="NC_003919.1"/>
</dbReference>
<dbReference type="SMR" id="Q8PNZ5"/>
<dbReference type="KEGG" id="xac:XAC0893"/>
<dbReference type="eggNOG" id="COG0008">
    <property type="taxonomic scope" value="Bacteria"/>
</dbReference>
<dbReference type="HOGENOM" id="CLU_001882_2_3_6"/>
<dbReference type="Proteomes" id="UP000000576">
    <property type="component" value="Chromosome"/>
</dbReference>
<dbReference type="GO" id="GO:0005829">
    <property type="term" value="C:cytosol"/>
    <property type="evidence" value="ECO:0007669"/>
    <property type="project" value="TreeGrafter"/>
</dbReference>
<dbReference type="GO" id="GO:0005524">
    <property type="term" value="F:ATP binding"/>
    <property type="evidence" value="ECO:0007669"/>
    <property type="project" value="UniProtKB-UniRule"/>
</dbReference>
<dbReference type="GO" id="GO:0004819">
    <property type="term" value="F:glutamine-tRNA ligase activity"/>
    <property type="evidence" value="ECO:0007669"/>
    <property type="project" value="UniProtKB-UniRule"/>
</dbReference>
<dbReference type="GO" id="GO:0006425">
    <property type="term" value="P:glutaminyl-tRNA aminoacylation"/>
    <property type="evidence" value="ECO:0007669"/>
    <property type="project" value="InterPro"/>
</dbReference>
<dbReference type="GO" id="GO:0006424">
    <property type="term" value="P:glutamyl-tRNA aminoacylation"/>
    <property type="evidence" value="ECO:0007669"/>
    <property type="project" value="UniProtKB-UniRule"/>
</dbReference>
<dbReference type="FunFam" id="1.10.1160.10:FF:000001">
    <property type="entry name" value="Glutamine--tRNA ligase"/>
    <property type="match status" value="1"/>
</dbReference>
<dbReference type="FunFam" id="2.40.240.10:FF:000020">
    <property type="entry name" value="Glutamine--tRNA ligase"/>
    <property type="match status" value="1"/>
</dbReference>
<dbReference type="FunFam" id="2.40.240.10:FF:000023">
    <property type="entry name" value="Glutamine--tRNA ligase"/>
    <property type="match status" value="1"/>
</dbReference>
<dbReference type="FunFam" id="3.90.800.10:FF:000002">
    <property type="entry name" value="Glutamine--tRNA ligase"/>
    <property type="match status" value="1"/>
</dbReference>
<dbReference type="FunFam" id="3.40.50.620:FF:000037">
    <property type="entry name" value="Glutamine--tRNA ligase cytoplasmic"/>
    <property type="match status" value="1"/>
</dbReference>
<dbReference type="Gene3D" id="1.10.1160.10">
    <property type="entry name" value="Glutamyl-trna Synthetase, Domain 2"/>
    <property type="match status" value="1"/>
</dbReference>
<dbReference type="Gene3D" id="3.90.800.10">
    <property type="entry name" value="Glutamyl-tRNA Synthetase, Domain 3"/>
    <property type="match status" value="1"/>
</dbReference>
<dbReference type="Gene3D" id="3.40.50.620">
    <property type="entry name" value="HUPs"/>
    <property type="match status" value="1"/>
</dbReference>
<dbReference type="Gene3D" id="2.40.240.10">
    <property type="entry name" value="Ribosomal Protein L25, Chain P"/>
    <property type="match status" value="2"/>
</dbReference>
<dbReference type="HAMAP" id="MF_00126">
    <property type="entry name" value="Gln_tRNA_synth"/>
    <property type="match status" value="1"/>
</dbReference>
<dbReference type="InterPro" id="IPR001412">
    <property type="entry name" value="aa-tRNA-synth_I_CS"/>
</dbReference>
<dbReference type="InterPro" id="IPR004514">
    <property type="entry name" value="Gln-tRNA-synth"/>
</dbReference>
<dbReference type="InterPro" id="IPR050132">
    <property type="entry name" value="Gln/Glu-tRNA_Ligase"/>
</dbReference>
<dbReference type="InterPro" id="IPR022861">
    <property type="entry name" value="Gln_tRNA_ligase_bac"/>
</dbReference>
<dbReference type="InterPro" id="IPR000924">
    <property type="entry name" value="Glu/Gln-tRNA-synth"/>
</dbReference>
<dbReference type="InterPro" id="IPR020058">
    <property type="entry name" value="Glu/Gln-tRNA-synth_Ib_cat-dom"/>
</dbReference>
<dbReference type="InterPro" id="IPR020059">
    <property type="entry name" value="Glu/Gln-tRNA-synth_Ib_codon-bd"/>
</dbReference>
<dbReference type="InterPro" id="IPR020061">
    <property type="entry name" value="Glu_tRNA_lig_a-bdl"/>
</dbReference>
<dbReference type="InterPro" id="IPR020056">
    <property type="entry name" value="Rbsml_bL25/Gln-tRNA_synth_N"/>
</dbReference>
<dbReference type="InterPro" id="IPR011035">
    <property type="entry name" value="Ribosomal_bL25/Gln-tRNA_synth"/>
</dbReference>
<dbReference type="InterPro" id="IPR014729">
    <property type="entry name" value="Rossmann-like_a/b/a_fold"/>
</dbReference>
<dbReference type="InterPro" id="IPR049437">
    <property type="entry name" value="tRNA-synt_1c_C2"/>
</dbReference>
<dbReference type="NCBIfam" id="TIGR00440">
    <property type="entry name" value="glnS"/>
    <property type="match status" value="1"/>
</dbReference>
<dbReference type="NCBIfam" id="NF011291">
    <property type="entry name" value="PRK14703.1"/>
    <property type="match status" value="1"/>
</dbReference>
<dbReference type="PANTHER" id="PTHR43097:SF5">
    <property type="entry name" value="GLUTAMATE--TRNA LIGASE"/>
    <property type="match status" value="1"/>
</dbReference>
<dbReference type="PANTHER" id="PTHR43097">
    <property type="entry name" value="GLUTAMINE-TRNA LIGASE"/>
    <property type="match status" value="1"/>
</dbReference>
<dbReference type="Pfam" id="PF00749">
    <property type="entry name" value="tRNA-synt_1c"/>
    <property type="match status" value="1"/>
</dbReference>
<dbReference type="Pfam" id="PF03950">
    <property type="entry name" value="tRNA-synt_1c_C"/>
    <property type="match status" value="1"/>
</dbReference>
<dbReference type="Pfam" id="PF20974">
    <property type="entry name" value="tRNA-synt_1c_C2"/>
    <property type="match status" value="1"/>
</dbReference>
<dbReference type="PRINTS" id="PR00987">
    <property type="entry name" value="TRNASYNTHGLU"/>
</dbReference>
<dbReference type="SUPFAM" id="SSF52374">
    <property type="entry name" value="Nucleotidylyl transferase"/>
    <property type="match status" value="1"/>
</dbReference>
<dbReference type="SUPFAM" id="SSF50715">
    <property type="entry name" value="Ribosomal protein L25-like"/>
    <property type="match status" value="1"/>
</dbReference>
<dbReference type="PROSITE" id="PS00178">
    <property type="entry name" value="AA_TRNA_LIGASE_I"/>
    <property type="match status" value="1"/>
</dbReference>
<proteinExistence type="inferred from homology"/>
<accession>Q8PNZ5</accession>
<comment type="catalytic activity">
    <reaction evidence="1">
        <text>tRNA(Gln) + L-glutamine + ATP = L-glutaminyl-tRNA(Gln) + AMP + diphosphate</text>
        <dbReference type="Rhea" id="RHEA:20121"/>
        <dbReference type="Rhea" id="RHEA-COMP:9662"/>
        <dbReference type="Rhea" id="RHEA-COMP:9681"/>
        <dbReference type="ChEBI" id="CHEBI:30616"/>
        <dbReference type="ChEBI" id="CHEBI:33019"/>
        <dbReference type="ChEBI" id="CHEBI:58359"/>
        <dbReference type="ChEBI" id="CHEBI:78442"/>
        <dbReference type="ChEBI" id="CHEBI:78521"/>
        <dbReference type="ChEBI" id="CHEBI:456215"/>
        <dbReference type="EC" id="6.1.1.18"/>
    </reaction>
</comment>
<comment type="subunit">
    <text evidence="1">Monomer.</text>
</comment>
<comment type="subcellular location">
    <subcellularLocation>
        <location evidence="1">Cytoplasm</location>
    </subcellularLocation>
</comment>
<comment type="similarity">
    <text evidence="1">Belongs to the class-I aminoacyl-tRNA synthetase family.</text>
</comment>
<keyword id="KW-0030">Aminoacyl-tRNA synthetase</keyword>
<keyword id="KW-0067">ATP-binding</keyword>
<keyword id="KW-0963">Cytoplasm</keyword>
<keyword id="KW-0436">Ligase</keyword>
<keyword id="KW-0547">Nucleotide-binding</keyword>
<keyword id="KW-0648">Protein biosynthesis</keyword>
<gene>
    <name evidence="1" type="primary">glnS</name>
    <name type="ordered locus">XAC0893</name>
</gene>
<protein>
    <recommendedName>
        <fullName evidence="1">Glutamine--tRNA ligase</fullName>
        <ecNumber evidence="1">6.1.1.18</ecNumber>
    </recommendedName>
    <alternativeName>
        <fullName evidence="1">Glutaminyl-tRNA synthetase</fullName>
        <shortName evidence="1">GlnRS</shortName>
    </alternativeName>
</protein>
<reference key="1">
    <citation type="journal article" date="2002" name="Nature">
        <title>Comparison of the genomes of two Xanthomonas pathogens with differing host specificities.</title>
        <authorList>
            <person name="da Silva A.C.R."/>
            <person name="Ferro J.A."/>
            <person name="Reinach F.C."/>
            <person name="Farah C.S."/>
            <person name="Furlan L.R."/>
            <person name="Quaggio R.B."/>
            <person name="Monteiro-Vitorello C.B."/>
            <person name="Van Sluys M.A."/>
            <person name="Almeida N.F. Jr."/>
            <person name="Alves L.M.C."/>
            <person name="do Amaral A.M."/>
            <person name="Bertolini M.C."/>
            <person name="Camargo L.E.A."/>
            <person name="Camarotte G."/>
            <person name="Cannavan F."/>
            <person name="Cardozo J."/>
            <person name="Chambergo F."/>
            <person name="Ciapina L.P."/>
            <person name="Cicarelli R.M.B."/>
            <person name="Coutinho L.L."/>
            <person name="Cursino-Santos J.R."/>
            <person name="El-Dorry H."/>
            <person name="Faria J.B."/>
            <person name="Ferreira A.J.S."/>
            <person name="Ferreira R.C.C."/>
            <person name="Ferro M.I.T."/>
            <person name="Formighieri E.F."/>
            <person name="Franco M.C."/>
            <person name="Greggio C.C."/>
            <person name="Gruber A."/>
            <person name="Katsuyama A.M."/>
            <person name="Kishi L.T."/>
            <person name="Leite R.P."/>
            <person name="Lemos E.G.M."/>
            <person name="Lemos M.V.F."/>
            <person name="Locali E.C."/>
            <person name="Machado M.A."/>
            <person name="Madeira A.M.B.N."/>
            <person name="Martinez-Rossi N.M."/>
            <person name="Martins E.C."/>
            <person name="Meidanis J."/>
            <person name="Menck C.F.M."/>
            <person name="Miyaki C.Y."/>
            <person name="Moon D.H."/>
            <person name="Moreira L.M."/>
            <person name="Novo M.T.M."/>
            <person name="Okura V.K."/>
            <person name="Oliveira M.C."/>
            <person name="Oliveira V.R."/>
            <person name="Pereira H.A."/>
            <person name="Rossi A."/>
            <person name="Sena J.A.D."/>
            <person name="Silva C."/>
            <person name="de Souza R.F."/>
            <person name="Spinola L.A.F."/>
            <person name="Takita M.A."/>
            <person name="Tamura R.E."/>
            <person name="Teixeira E.C."/>
            <person name="Tezza R.I.D."/>
            <person name="Trindade dos Santos M."/>
            <person name="Truffi D."/>
            <person name="Tsai S.M."/>
            <person name="White F.F."/>
            <person name="Setubal J.C."/>
            <person name="Kitajima J.P."/>
        </authorList>
    </citation>
    <scope>NUCLEOTIDE SEQUENCE [LARGE SCALE GENOMIC DNA]</scope>
    <source>
        <strain>306</strain>
    </source>
</reference>
<evidence type="ECO:0000255" key="1">
    <source>
        <dbReference type="HAMAP-Rule" id="MF_00126"/>
    </source>
</evidence>
<feature type="chain" id="PRO_0000195855" description="Glutamine--tRNA ligase">
    <location>
        <begin position="1"/>
        <end position="579"/>
    </location>
</feature>
<feature type="short sequence motif" description="'HIGH' region" evidence="1">
    <location>
        <begin position="41"/>
        <end position="51"/>
    </location>
</feature>
<feature type="short sequence motif" description="'KMSKS' region" evidence="1">
    <location>
        <begin position="292"/>
        <end position="296"/>
    </location>
</feature>
<feature type="binding site" evidence="1">
    <location>
        <begin position="42"/>
        <end position="44"/>
    </location>
    <ligand>
        <name>ATP</name>
        <dbReference type="ChEBI" id="CHEBI:30616"/>
    </ligand>
</feature>
<feature type="binding site" evidence="1">
    <location>
        <begin position="48"/>
        <end position="54"/>
    </location>
    <ligand>
        <name>ATP</name>
        <dbReference type="ChEBI" id="CHEBI:30616"/>
    </ligand>
</feature>
<feature type="binding site" evidence="1">
    <location>
        <position position="74"/>
    </location>
    <ligand>
        <name>L-glutamine</name>
        <dbReference type="ChEBI" id="CHEBI:58359"/>
    </ligand>
</feature>
<feature type="binding site" evidence="1">
    <location>
        <position position="218"/>
    </location>
    <ligand>
        <name>L-glutamine</name>
        <dbReference type="ChEBI" id="CHEBI:58359"/>
    </ligand>
</feature>
<feature type="binding site" evidence="1">
    <location>
        <position position="237"/>
    </location>
    <ligand>
        <name>ATP</name>
        <dbReference type="ChEBI" id="CHEBI:30616"/>
    </ligand>
</feature>
<feature type="binding site" evidence="1">
    <location>
        <begin position="285"/>
        <end position="286"/>
    </location>
    <ligand>
        <name>ATP</name>
        <dbReference type="ChEBI" id="CHEBI:30616"/>
    </ligand>
</feature>
<feature type="binding site" evidence="1">
    <location>
        <begin position="293"/>
        <end position="295"/>
    </location>
    <ligand>
        <name>ATP</name>
        <dbReference type="ChEBI" id="CHEBI:30616"/>
    </ligand>
</feature>
<organism>
    <name type="scientific">Xanthomonas axonopodis pv. citri (strain 306)</name>
    <dbReference type="NCBI Taxonomy" id="190486"/>
    <lineage>
        <taxon>Bacteria</taxon>
        <taxon>Pseudomonadati</taxon>
        <taxon>Pseudomonadota</taxon>
        <taxon>Gammaproteobacteria</taxon>
        <taxon>Lysobacterales</taxon>
        <taxon>Lysobacteraceae</taxon>
        <taxon>Xanthomonas</taxon>
    </lineage>
</organism>